<organism>
    <name type="scientific">Thermus thermophilus</name>
    <dbReference type="NCBI Taxonomy" id="274"/>
    <lineage>
        <taxon>Bacteria</taxon>
        <taxon>Thermotogati</taxon>
        <taxon>Deinococcota</taxon>
        <taxon>Deinococci</taxon>
        <taxon>Thermales</taxon>
        <taxon>Thermaceae</taxon>
        <taxon>Thermus</taxon>
    </lineage>
</organism>
<proteinExistence type="evidence at protein level"/>
<accession>O66131</accession>
<protein>
    <recommendedName>
        <fullName evidence="2">Glycerol kinase</fullName>
        <ecNumber evidence="2">2.7.1.30</ecNumber>
    </recommendedName>
    <alternativeName>
        <fullName evidence="2">ATP:glycerol 3-phosphotransferase</fullName>
    </alternativeName>
    <alternativeName>
        <fullName evidence="2">Glycerokinase</fullName>
        <shortName evidence="2">GK</shortName>
    </alternativeName>
</protein>
<reference key="1">
    <citation type="journal article" date="1998" name="Biochim. Biophys. Acta">
        <title>Thermostable glycerol kinase from Thermus flavus: cloning, sequencing, and expression of the enzyme gene.</title>
        <authorList>
            <person name="Huang H.-S."/>
            <person name="Kabashima T."/>
            <person name="Ito K."/>
            <person name="Yin C.-H."/>
            <person name="Nishiya Y."/>
            <person name="Kawamura Y."/>
            <person name="Yoshimoto T."/>
        </authorList>
    </citation>
    <scope>NUCLEOTIDE SEQUENCE [GENOMIC DNA]</scope>
    <scope>PROTEIN SEQUENCE OF 1-16</scope>
    <scope>FUNCTION</scope>
    <scope>ACTIVITY REGULATION</scope>
    <source>
        <strain>ATCC 33923 / DSM 674 / AT-62</strain>
    </source>
</reference>
<comment type="function">
    <text evidence="2 3">Key enzyme in the regulation of glycerol uptake and metabolism. Catalyzes the phosphorylation of glycerol to yield sn-glycerol 3-phosphate.</text>
</comment>
<comment type="catalytic activity">
    <reaction evidence="2">
        <text>glycerol + ATP = sn-glycerol 3-phosphate + ADP + H(+)</text>
        <dbReference type="Rhea" id="RHEA:21644"/>
        <dbReference type="ChEBI" id="CHEBI:15378"/>
        <dbReference type="ChEBI" id="CHEBI:17754"/>
        <dbReference type="ChEBI" id="CHEBI:30616"/>
        <dbReference type="ChEBI" id="CHEBI:57597"/>
        <dbReference type="ChEBI" id="CHEBI:456216"/>
        <dbReference type="EC" id="2.7.1.30"/>
    </reaction>
</comment>
<comment type="activity regulation">
    <text evidence="3">Inhibited by fructose 1,6-bisphosphate and p-chloromercuribenzoate (PCMB).</text>
</comment>
<comment type="biophysicochemical properties">
    <temperatureDependence>
        <text>Thermostable.</text>
    </temperatureDependence>
</comment>
<comment type="pathway">
    <text evidence="2">Polyol metabolism; glycerol degradation via glycerol kinase pathway; sn-glycerol 3-phosphate from glycerol: step 1/1.</text>
</comment>
<comment type="PTM">
    <text evidence="1">The phosphoenolpyruvate-dependent sugar phosphotransferase system (PTS), including enzyme I, and histidine-containing protein (HPr) are required for the phosphorylation of, which leads to the activation of the enzyme.</text>
</comment>
<comment type="similarity">
    <text evidence="2">Belongs to the FGGY kinase family.</text>
</comment>
<dbReference type="EC" id="2.7.1.30" evidence="2"/>
<dbReference type="EMBL" id="AB004569">
    <property type="protein sequence ID" value="BAA28283.1"/>
    <property type="molecule type" value="Genomic_DNA"/>
</dbReference>
<dbReference type="SMR" id="O66131"/>
<dbReference type="UniPathway" id="UPA00618">
    <property type="reaction ID" value="UER00672"/>
</dbReference>
<dbReference type="GO" id="GO:0005829">
    <property type="term" value="C:cytosol"/>
    <property type="evidence" value="ECO:0007669"/>
    <property type="project" value="TreeGrafter"/>
</dbReference>
<dbReference type="GO" id="GO:0005524">
    <property type="term" value="F:ATP binding"/>
    <property type="evidence" value="ECO:0007669"/>
    <property type="project" value="UniProtKB-UniRule"/>
</dbReference>
<dbReference type="GO" id="GO:0004370">
    <property type="term" value="F:glycerol kinase activity"/>
    <property type="evidence" value="ECO:0000250"/>
    <property type="project" value="UniProtKB"/>
</dbReference>
<dbReference type="GO" id="GO:0019563">
    <property type="term" value="P:glycerol catabolic process"/>
    <property type="evidence" value="ECO:0007669"/>
    <property type="project" value="UniProtKB-UniRule"/>
</dbReference>
<dbReference type="GO" id="GO:0006071">
    <property type="term" value="P:glycerol metabolic process"/>
    <property type="evidence" value="ECO:0000250"/>
    <property type="project" value="UniProtKB"/>
</dbReference>
<dbReference type="GO" id="GO:0006072">
    <property type="term" value="P:glycerol-3-phosphate metabolic process"/>
    <property type="evidence" value="ECO:0007669"/>
    <property type="project" value="InterPro"/>
</dbReference>
<dbReference type="CDD" id="cd07786">
    <property type="entry name" value="FGGY_EcGK_like"/>
    <property type="match status" value="1"/>
</dbReference>
<dbReference type="FunFam" id="3.30.420.40:FF:000007">
    <property type="entry name" value="Glycerol kinase"/>
    <property type="match status" value="1"/>
</dbReference>
<dbReference type="FunFam" id="3.30.420.40:FF:000008">
    <property type="entry name" value="Glycerol kinase"/>
    <property type="match status" value="1"/>
</dbReference>
<dbReference type="Gene3D" id="3.30.420.40">
    <property type="match status" value="2"/>
</dbReference>
<dbReference type="HAMAP" id="MF_00186">
    <property type="entry name" value="Glycerol_kin"/>
    <property type="match status" value="1"/>
</dbReference>
<dbReference type="InterPro" id="IPR043129">
    <property type="entry name" value="ATPase_NBD"/>
</dbReference>
<dbReference type="InterPro" id="IPR000577">
    <property type="entry name" value="Carb_kinase_FGGY"/>
</dbReference>
<dbReference type="InterPro" id="IPR018483">
    <property type="entry name" value="Carb_kinase_FGGY_CS"/>
</dbReference>
<dbReference type="InterPro" id="IPR018485">
    <property type="entry name" value="FGGY_C"/>
</dbReference>
<dbReference type="InterPro" id="IPR018484">
    <property type="entry name" value="FGGY_N"/>
</dbReference>
<dbReference type="InterPro" id="IPR005999">
    <property type="entry name" value="Glycerol_kin"/>
</dbReference>
<dbReference type="NCBIfam" id="TIGR01311">
    <property type="entry name" value="glycerol_kin"/>
    <property type="match status" value="1"/>
</dbReference>
<dbReference type="NCBIfam" id="NF000756">
    <property type="entry name" value="PRK00047.1"/>
    <property type="match status" value="1"/>
</dbReference>
<dbReference type="PANTHER" id="PTHR10196:SF69">
    <property type="entry name" value="GLYCEROL KINASE"/>
    <property type="match status" value="1"/>
</dbReference>
<dbReference type="PANTHER" id="PTHR10196">
    <property type="entry name" value="SUGAR KINASE"/>
    <property type="match status" value="1"/>
</dbReference>
<dbReference type="Pfam" id="PF02782">
    <property type="entry name" value="FGGY_C"/>
    <property type="match status" value="1"/>
</dbReference>
<dbReference type="Pfam" id="PF00370">
    <property type="entry name" value="FGGY_N"/>
    <property type="match status" value="1"/>
</dbReference>
<dbReference type="PIRSF" id="PIRSF000538">
    <property type="entry name" value="GlpK"/>
    <property type="match status" value="1"/>
</dbReference>
<dbReference type="SUPFAM" id="SSF53067">
    <property type="entry name" value="Actin-like ATPase domain"/>
    <property type="match status" value="2"/>
</dbReference>
<dbReference type="PROSITE" id="PS00933">
    <property type="entry name" value="FGGY_KINASES_1"/>
    <property type="match status" value="1"/>
</dbReference>
<dbReference type="PROSITE" id="PS00445">
    <property type="entry name" value="FGGY_KINASES_2"/>
    <property type="match status" value="1"/>
</dbReference>
<name>GLPK_THETH</name>
<sequence length="496" mass="54836">MNQYMLAIDQGTTSSRAILFNQKGEIVHMAQKEFTQYFPQPGWVEHNANEIWGSVLAVIASVLSEAQVKPEQVAGIGITNQRETTVVWEKDTGNPIYNAIVWQSRQTAGICDELKAKGYDPLFRKKTGLLIDAYFSGTKVKWILDHVDGARERAERGELLFGTIDTWLIWKLSGGRVHVTDYSNASRTLMFNIHTLEWDDELLDILGVPKAMLPEVRPSSEVYAKTAPYHFFGVEVPIAGAAGDQQAALFGQACFTEGMAKNTYGTGCFMLMNTGEKAVASKHGLLTTIAWGIDGKVEYALEGSIFVAGSAIQWLRDGLRMIKTAADSETYAEKVESTDGVYVVPAFIGLGTPYWDSEVRGAVFGLTRGTTKEHFIRATLESLAYQTKDVLAVMEADSGISLTTLRVDGGAVKNNFLMQFQSDLLAVPVERPVVNETTALGAAYLAGLAVGYWNSRDDIAAQWQLERRFEPKMDDDKRTMLYDGWKKAVRAAMAFK</sequence>
<feature type="chain" id="PRO_0000059516" description="Glycerol kinase">
    <location>
        <begin position="1"/>
        <end position="496"/>
    </location>
</feature>
<feature type="binding site" evidence="2">
    <location>
        <position position="12"/>
    </location>
    <ligand>
        <name>ADP</name>
        <dbReference type="ChEBI" id="CHEBI:456216"/>
    </ligand>
</feature>
<feature type="binding site" evidence="2">
    <location>
        <position position="12"/>
    </location>
    <ligand>
        <name>ATP</name>
        <dbReference type="ChEBI" id="CHEBI:30616"/>
    </ligand>
</feature>
<feature type="binding site" evidence="2">
    <location>
        <position position="12"/>
    </location>
    <ligand>
        <name>sn-glycerol 3-phosphate</name>
        <dbReference type="ChEBI" id="CHEBI:57597"/>
    </ligand>
</feature>
<feature type="binding site" evidence="2">
    <location>
        <position position="13"/>
    </location>
    <ligand>
        <name>ATP</name>
        <dbReference type="ChEBI" id="CHEBI:30616"/>
    </ligand>
</feature>
<feature type="binding site" evidence="2">
    <location>
        <position position="14"/>
    </location>
    <ligand>
        <name>ATP</name>
        <dbReference type="ChEBI" id="CHEBI:30616"/>
    </ligand>
</feature>
<feature type="binding site" evidence="2">
    <location>
        <position position="16"/>
    </location>
    <ligand>
        <name>ADP</name>
        <dbReference type="ChEBI" id="CHEBI:456216"/>
    </ligand>
</feature>
<feature type="binding site" evidence="2">
    <location>
        <position position="82"/>
    </location>
    <ligand>
        <name>glycerol</name>
        <dbReference type="ChEBI" id="CHEBI:17754"/>
    </ligand>
</feature>
<feature type="binding site" evidence="2">
    <location>
        <position position="82"/>
    </location>
    <ligand>
        <name>sn-glycerol 3-phosphate</name>
        <dbReference type="ChEBI" id="CHEBI:57597"/>
    </ligand>
</feature>
<feature type="binding site" evidence="2">
    <location>
        <position position="83"/>
    </location>
    <ligand>
        <name>glycerol</name>
        <dbReference type="ChEBI" id="CHEBI:17754"/>
    </ligand>
</feature>
<feature type="binding site" evidence="2">
    <location>
        <position position="83"/>
    </location>
    <ligand>
        <name>sn-glycerol 3-phosphate</name>
        <dbReference type="ChEBI" id="CHEBI:57597"/>
    </ligand>
</feature>
<feature type="binding site" evidence="2">
    <location>
        <position position="134"/>
    </location>
    <ligand>
        <name>glycerol</name>
        <dbReference type="ChEBI" id="CHEBI:17754"/>
    </ligand>
</feature>
<feature type="binding site" evidence="2">
    <location>
        <position position="134"/>
    </location>
    <ligand>
        <name>sn-glycerol 3-phosphate</name>
        <dbReference type="ChEBI" id="CHEBI:57597"/>
    </ligand>
</feature>
<feature type="binding site" evidence="2">
    <location>
        <position position="244"/>
    </location>
    <ligand>
        <name>glycerol</name>
        <dbReference type="ChEBI" id="CHEBI:17754"/>
    </ligand>
</feature>
<feature type="binding site" evidence="2">
    <location>
        <position position="244"/>
    </location>
    <ligand>
        <name>sn-glycerol 3-phosphate</name>
        <dbReference type="ChEBI" id="CHEBI:57597"/>
    </ligand>
</feature>
<feature type="binding site" evidence="2">
    <location>
        <position position="245"/>
    </location>
    <ligand>
        <name>glycerol</name>
        <dbReference type="ChEBI" id="CHEBI:17754"/>
    </ligand>
</feature>
<feature type="binding site" evidence="2">
    <location>
        <position position="266"/>
    </location>
    <ligand>
        <name>ADP</name>
        <dbReference type="ChEBI" id="CHEBI:456216"/>
    </ligand>
</feature>
<feature type="binding site" evidence="2">
    <location>
        <position position="266"/>
    </location>
    <ligand>
        <name>ATP</name>
        <dbReference type="ChEBI" id="CHEBI:30616"/>
    </ligand>
</feature>
<feature type="binding site" evidence="2">
    <location>
        <position position="309"/>
    </location>
    <ligand>
        <name>ADP</name>
        <dbReference type="ChEBI" id="CHEBI:456216"/>
    </ligand>
</feature>
<feature type="binding site" evidence="2">
    <location>
        <position position="309"/>
    </location>
    <ligand>
        <name>ATP</name>
        <dbReference type="ChEBI" id="CHEBI:30616"/>
    </ligand>
</feature>
<feature type="binding site" evidence="2">
    <location>
        <position position="313"/>
    </location>
    <ligand>
        <name>ATP</name>
        <dbReference type="ChEBI" id="CHEBI:30616"/>
    </ligand>
</feature>
<feature type="binding site" evidence="2">
    <location>
        <position position="410"/>
    </location>
    <ligand>
        <name>ADP</name>
        <dbReference type="ChEBI" id="CHEBI:456216"/>
    </ligand>
</feature>
<feature type="binding site" evidence="2">
    <location>
        <position position="410"/>
    </location>
    <ligand>
        <name>ATP</name>
        <dbReference type="ChEBI" id="CHEBI:30616"/>
    </ligand>
</feature>
<feature type="binding site" evidence="2">
    <location>
        <position position="414"/>
    </location>
    <ligand>
        <name>ADP</name>
        <dbReference type="ChEBI" id="CHEBI:456216"/>
    </ligand>
</feature>
<feature type="modified residue" description="Phosphohistidine; by HPr" evidence="2">
    <location>
        <position position="230"/>
    </location>
</feature>
<gene>
    <name evidence="2" type="primary">glpK</name>
</gene>
<evidence type="ECO:0000250" key="1"/>
<evidence type="ECO:0000255" key="2">
    <source>
        <dbReference type="HAMAP-Rule" id="MF_00186"/>
    </source>
</evidence>
<evidence type="ECO:0000269" key="3">
    <source>
    </source>
</evidence>
<keyword id="KW-0067">ATP-binding</keyword>
<keyword id="KW-0903">Direct protein sequencing</keyword>
<keyword id="KW-0319">Glycerol metabolism</keyword>
<keyword id="KW-0418">Kinase</keyword>
<keyword id="KW-0547">Nucleotide-binding</keyword>
<keyword id="KW-0597">Phosphoprotein</keyword>
<keyword id="KW-0808">Transferase</keyword>